<name>MTAD_THESM</name>
<evidence type="ECO:0000255" key="1">
    <source>
        <dbReference type="HAMAP-Rule" id="MF_01281"/>
    </source>
</evidence>
<keyword id="KW-0378">Hydrolase</keyword>
<keyword id="KW-0479">Metal-binding</keyword>
<keyword id="KW-1185">Reference proteome</keyword>
<keyword id="KW-0862">Zinc</keyword>
<organism>
    <name type="scientific">Thermococcus sibiricus (strain DSM 12597 / MM 739)</name>
    <dbReference type="NCBI Taxonomy" id="604354"/>
    <lineage>
        <taxon>Archaea</taxon>
        <taxon>Methanobacteriati</taxon>
        <taxon>Methanobacteriota</taxon>
        <taxon>Thermococci</taxon>
        <taxon>Thermococcales</taxon>
        <taxon>Thermococcaceae</taxon>
        <taxon>Thermococcus</taxon>
    </lineage>
</organism>
<sequence>MSILIKNGYVIYGDSLKIIKADIYIENNKISKIGKDLTKSADHVIDAKGRVISPGFINAHTHSPMVLLRGLADDISLMEWLQNYVWPVEKKLKRVHIYWGALLGTLEMIKTGTTTFVDMYFHMEEVAKAVEEIGLRAYLSYGMVDLGDEEKRSIEIRETLKLLKFIESLSSPRVEFLFGPHAPYTCSPKLLTWVREKADETGKMITIHLSETKDEVKQIKEKYGKTPVELLDELGFLKNDVIAAHGVWLTDKEIEILAKRDVTIVHNPASNMKLGSGVMSLEKLLKAGVNVALGTDGAASNNNLDMIEEMKLAALLHKVHTLNPTLADAKTVFKMATQNGAKALRLNAGVIKEGALADVIVIDFNKPHLRPITNIISHIVYSANGNDVETTIVDGKVVMLDREVLTIDEEKILDKVQKIVDKLR</sequence>
<protein>
    <recommendedName>
        <fullName evidence="1">5-methylthioadenosine/S-adenosylhomocysteine deaminase</fullName>
        <shortName evidence="1">MTA/SAH deaminase</shortName>
        <ecNumber evidence="1">3.5.4.28</ecNumber>
        <ecNumber evidence="1">3.5.4.31</ecNumber>
    </recommendedName>
</protein>
<comment type="function">
    <text evidence="1">Catalyzes the deamination of 5-methylthioadenosine and S-adenosyl-L-homocysteine into 5-methylthioinosine and S-inosyl-L-homocysteine, respectively. Is also able to deaminate adenosine.</text>
</comment>
<comment type="catalytic activity">
    <reaction evidence="1">
        <text>S-adenosyl-L-homocysteine + H2O + H(+) = S-inosyl-L-homocysteine + NH4(+)</text>
        <dbReference type="Rhea" id="RHEA:20716"/>
        <dbReference type="ChEBI" id="CHEBI:15377"/>
        <dbReference type="ChEBI" id="CHEBI:15378"/>
        <dbReference type="ChEBI" id="CHEBI:28938"/>
        <dbReference type="ChEBI" id="CHEBI:57856"/>
        <dbReference type="ChEBI" id="CHEBI:57985"/>
        <dbReference type="EC" id="3.5.4.28"/>
    </reaction>
</comment>
<comment type="catalytic activity">
    <reaction evidence="1">
        <text>S-methyl-5'-thioadenosine + H2O + H(+) = S-methyl-5'-thioinosine + NH4(+)</text>
        <dbReference type="Rhea" id="RHEA:25025"/>
        <dbReference type="ChEBI" id="CHEBI:15377"/>
        <dbReference type="ChEBI" id="CHEBI:15378"/>
        <dbReference type="ChEBI" id="CHEBI:17509"/>
        <dbReference type="ChEBI" id="CHEBI:28938"/>
        <dbReference type="ChEBI" id="CHEBI:48595"/>
        <dbReference type="EC" id="3.5.4.31"/>
    </reaction>
</comment>
<comment type="cofactor">
    <cofactor evidence="1">
        <name>Zn(2+)</name>
        <dbReference type="ChEBI" id="CHEBI:29105"/>
    </cofactor>
    <text evidence="1">Binds 1 zinc ion per subunit.</text>
</comment>
<comment type="similarity">
    <text evidence="1">Belongs to the metallo-dependent hydrolases superfamily. MTA/SAH deaminase family.</text>
</comment>
<accession>C6A048</accession>
<reference key="1">
    <citation type="journal article" date="2009" name="Appl. Environ. Microbiol.">
        <title>Metabolic versatility and indigenous origin of the archaeon Thermococcus sibiricus, isolated from a siberian oil reservoir, as revealed by genome analysis.</title>
        <authorList>
            <person name="Mardanov A.V."/>
            <person name="Ravin N.V."/>
            <person name="Svetlitchnyi V.A."/>
            <person name="Beletsky A.V."/>
            <person name="Miroshnichenko M.L."/>
            <person name="Bonch-Osmolovskaya E.A."/>
            <person name="Skryabin K.G."/>
        </authorList>
    </citation>
    <scope>NUCLEOTIDE SEQUENCE [LARGE SCALE GENOMIC DNA]</scope>
    <source>
        <strain>DSM 12597 / MM 739</strain>
    </source>
</reference>
<dbReference type="EC" id="3.5.4.28" evidence="1"/>
<dbReference type="EC" id="3.5.4.31" evidence="1"/>
<dbReference type="EMBL" id="CP001463">
    <property type="protein sequence ID" value="ACS91029.1"/>
    <property type="molecule type" value="Genomic_DNA"/>
</dbReference>
<dbReference type="RefSeq" id="WP_015850245.1">
    <property type="nucleotide sequence ID" value="NC_012883.1"/>
</dbReference>
<dbReference type="SMR" id="C6A048"/>
<dbReference type="STRING" id="604354.TSIB_1980"/>
<dbReference type="GeneID" id="8096993"/>
<dbReference type="KEGG" id="tsi:TSIB_1980"/>
<dbReference type="eggNOG" id="arCOG00695">
    <property type="taxonomic scope" value="Archaea"/>
</dbReference>
<dbReference type="HOGENOM" id="CLU_012358_2_1_2"/>
<dbReference type="OrthoDB" id="372084at2157"/>
<dbReference type="Proteomes" id="UP000009079">
    <property type="component" value="Chromosome"/>
</dbReference>
<dbReference type="GO" id="GO:0090614">
    <property type="term" value="F:5'-methylthioadenosine deaminase activity"/>
    <property type="evidence" value="ECO:0007669"/>
    <property type="project" value="UniProtKB-UniRule"/>
</dbReference>
<dbReference type="GO" id="GO:0046872">
    <property type="term" value="F:metal ion binding"/>
    <property type="evidence" value="ECO:0007669"/>
    <property type="project" value="UniProtKB-KW"/>
</dbReference>
<dbReference type="GO" id="GO:0050270">
    <property type="term" value="F:S-adenosylhomocysteine deaminase activity"/>
    <property type="evidence" value="ECO:0007669"/>
    <property type="project" value="UniProtKB-UniRule"/>
</dbReference>
<dbReference type="CDD" id="cd01298">
    <property type="entry name" value="ATZ_TRZ_like"/>
    <property type="match status" value="1"/>
</dbReference>
<dbReference type="FunFam" id="3.20.20.140:FF:000014">
    <property type="entry name" value="5-methylthioadenosine/S-adenosylhomocysteine deaminase"/>
    <property type="match status" value="1"/>
</dbReference>
<dbReference type="Gene3D" id="3.20.20.140">
    <property type="entry name" value="Metal-dependent hydrolases"/>
    <property type="match status" value="1"/>
</dbReference>
<dbReference type="Gene3D" id="2.30.40.10">
    <property type="entry name" value="Urease, subunit C, domain 1"/>
    <property type="match status" value="1"/>
</dbReference>
<dbReference type="HAMAP" id="MF_01281">
    <property type="entry name" value="MTA_SAH_deamin"/>
    <property type="match status" value="1"/>
</dbReference>
<dbReference type="InterPro" id="IPR006680">
    <property type="entry name" value="Amidohydro-rel"/>
</dbReference>
<dbReference type="InterPro" id="IPR023512">
    <property type="entry name" value="Deaminase_MtaD/DadD"/>
</dbReference>
<dbReference type="InterPro" id="IPR011059">
    <property type="entry name" value="Metal-dep_hydrolase_composite"/>
</dbReference>
<dbReference type="InterPro" id="IPR032466">
    <property type="entry name" value="Metal_Hydrolase"/>
</dbReference>
<dbReference type="InterPro" id="IPR050287">
    <property type="entry name" value="MTA/SAH_deaminase"/>
</dbReference>
<dbReference type="NCBIfam" id="NF006252">
    <property type="entry name" value="PRK08393.1"/>
    <property type="match status" value="1"/>
</dbReference>
<dbReference type="PANTHER" id="PTHR43794:SF11">
    <property type="entry name" value="AMIDOHYDROLASE-RELATED DOMAIN-CONTAINING PROTEIN"/>
    <property type="match status" value="1"/>
</dbReference>
<dbReference type="PANTHER" id="PTHR43794">
    <property type="entry name" value="AMINOHYDROLASE SSNA-RELATED"/>
    <property type="match status" value="1"/>
</dbReference>
<dbReference type="Pfam" id="PF01979">
    <property type="entry name" value="Amidohydro_1"/>
    <property type="match status" value="1"/>
</dbReference>
<dbReference type="SUPFAM" id="SSF51338">
    <property type="entry name" value="Composite domain of metallo-dependent hydrolases"/>
    <property type="match status" value="1"/>
</dbReference>
<dbReference type="SUPFAM" id="SSF51556">
    <property type="entry name" value="Metallo-dependent hydrolases"/>
    <property type="match status" value="1"/>
</dbReference>
<gene>
    <name evidence="1" type="primary">mtaD</name>
    <name type="ordered locus">TSIB_1980</name>
</gene>
<proteinExistence type="inferred from homology"/>
<feature type="chain" id="PRO_1000214207" description="5-methylthioadenosine/S-adenosylhomocysteine deaminase">
    <location>
        <begin position="1"/>
        <end position="424"/>
    </location>
</feature>
<feature type="binding site" evidence="1">
    <location>
        <position position="60"/>
    </location>
    <ligand>
        <name>Zn(2+)</name>
        <dbReference type="ChEBI" id="CHEBI:29105"/>
    </ligand>
</feature>
<feature type="binding site" evidence="1">
    <location>
        <position position="62"/>
    </location>
    <ligand>
        <name>Zn(2+)</name>
        <dbReference type="ChEBI" id="CHEBI:29105"/>
    </ligand>
</feature>
<feature type="binding site" evidence="1">
    <location>
        <position position="89"/>
    </location>
    <ligand>
        <name>substrate</name>
    </ligand>
</feature>
<feature type="binding site" evidence="1">
    <location>
        <position position="181"/>
    </location>
    <ligand>
        <name>substrate</name>
    </ligand>
</feature>
<feature type="binding site" evidence="1">
    <location>
        <position position="208"/>
    </location>
    <ligand>
        <name>Zn(2+)</name>
        <dbReference type="ChEBI" id="CHEBI:29105"/>
    </ligand>
</feature>
<feature type="binding site" evidence="1">
    <location>
        <position position="211"/>
    </location>
    <ligand>
        <name>substrate</name>
    </ligand>
</feature>
<feature type="binding site" evidence="1">
    <location>
        <position position="296"/>
    </location>
    <ligand>
        <name>substrate</name>
    </ligand>
</feature>
<feature type="binding site" evidence="1">
    <location>
        <position position="296"/>
    </location>
    <ligand>
        <name>Zn(2+)</name>
        <dbReference type="ChEBI" id="CHEBI:29105"/>
    </ligand>
</feature>